<organism>
    <name type="scientific">Acanthamoeba polyphaga mimivirus</name>
    <name type="common">APMV</name>
    <dbReference type="NCBI Taxonomy" id="212035"/>
    <lineage>
        <taxon>Viruses</taxon>
        <taxon>Varidnaviria</taxon>
        <taxon>Bamfordvirae</taxon>
        <taxon>Nucleocytoviricota</taxon>
        <taxon>Megaviricetes</taxon>
        <taxon>Imitervirales</taxon>
        <taxon>Mimiviridae</taxon>
        <taxon>Megamimivirinae</taxon>
        <taxon>Mimivirus</taxon>
        <taxon>Mimivirus bradfordmassiliense</taxon>
    </lineage>
</organism>
<evidence type="ECO:0000256" key="1">
    <source>
        <dbReference type="SAM" id="MobiDB-lite"/>
    </source>
</evidence>
<proteinExistence type="predicted"/>
<feature type="chain" id="PRO_0000253431" description="Uncharacterized protein R650">
    <location>
        <begin position="1"/>
        <end position="422"/>
    </location>
</feature>
<feature type="region of interest" description="Disordered" evidence="1">
    <location>
        <begin position="1"/>
        <end position="22"/>
    </location>
</feature>
<feature type="compositionally biased region" description="Low complexity" evidence="1">
    <location>
        <begin position="7"/>
        <end position="22"/>
    </location>
</feature>
<accession>Q5UR07</accession>
<protein>
    <recommendedName>
        <fullName>Uncharacterized protein R650</fullName>
    </recommendedName>
</protein>
<gene>
    <name type="ordered locus">MIMI_R650</name>
</gene>
<reference key="1">
    <citation type="journal article" date="2004" name="Science">
        <title>The 1.2-megabase genome sequence of Mimivirus.</title>
        <authorList>
            <person name="Raoult D."/>
            <person name="Audic S."/>
            <person name="Robert C."/>
            <person name="Abergel C."/>
            <person name="Renesto P."/>
            <person name="Ogata H."/>
            <person name="La Scola B."/>
            <person name="Susan M."/>
            <person name="Claverie J.-M."/>
        </authorList>
    </citation>
    <scope>NUCLEOTIDE SEQUENCE [LARGE SCALE GENOMIC DNA]</scope>
    <source>
        <strain>Rowbotham-Bradford</strain>
    </source>
</reference>
<organismHost>
    <name type="scientific">Acanthamoeba polyphaga</name>
    <name type="common">Amoeba</name>
    <dbReference type="NCBI Taxonomy" id="5757"/>
</organismHost>
<dbReference type="EMBL" id="AY653733">
    <property type="protein sequence ID" value="AAV50911.1"/>
    <property type="molecule type" value="Genomic_DNA"/>
</dbReference>
<dbReference type="SMR" id="Q5UR07"/>
<dbReference type="KEGG" id="vg:9925295"/>
<dbReference type="Proteomes" id="UP000001134">
    <property type="component" value="Genome"/>
</dbReference>
<dbReference type="InterPro" id="IPR045373">
    <property type="entry name" value="DUF5889"/>
</dbReference>
<dbReference type="Pfam" id="PF19237">
    <property type="entry name" value="DUF5889"/>
    <property type="match status" value="1"/>
</dbReference>
<name>YR650_MIMIV</name>
<keyword id="KW-1185">Reference proteome</keyword>
<sequence length="422" mass="50326">MIQNNPKSIGSSSNKSARSSGSRQNILKMIQFENQRLHEYYNDFSSLKETILTAPSIVEYLFQKPSMKYDTIEKIYKLFTDPKSNYLENYTNITRVTKYISDYLFADMIELIELQDKYHVCNDNYNYYVDMILKNRNKYPKYTYLSQRYTPLIQTIGDTLDNIQLVEKYVDDDGAKISIKYEISWIYNWTFKNDCKYNLDIPFVFDFFVVLVYRERLILFVIEVDRDINNPLYHTESIIKQIILFQMNVFVLRISQQHLKDNLKKRIIRFIKNAVSSKVYLSEKYITPNINLIDMDLVKLELEKFYQSYKCCNSYYHKSLLDNSTIYPDPIKNKFHNGRNMGITLKTDKIYNKDDDEYFDTLIGTKFTREPDIPIVVTDDVFDWIINKCPKEPSKKQYSERKISEKQQKYNDICISLVGKII</sequence>